<protein>
    <recommendedName>
        <fullName>Stearoyl-[acyl-carrier-protein] 9-desaturase 3, chloroplastic</fullName>
        <shortName>Stearoyl-ACP desaturase 3</shortName>
        <ecNumber evidence="4 5">1.14.19.2</ecNumber>
    </recommendedName>
    <alternativeName>
        <fullName>Acyl-[acyl-carrier-protein] desaturase 3</fullName>
    </alternativeName>
</protein>
<evidence type="ECO:0000250" key="1">
    <source>
        <dbReference type="UniProtKB" id="P22337"/>
    </source>
</evidence>
<evidence type="ECO:0000255" key="2"/>
<evidence type="ECO:0000256" key="3">
    <source>
        <dbReference type="SAM" id="MobiDB-lite"/>
    </source>
</evidence>
<evidence type="ECO:0000269" key="4">
    <source>
    </source>
</evidence>
<evidence type="ECO:0000269" key="5">
    <source>
    </source>
</evidence>
<evidence type="ECO:0000305" key="6"/>
<evidence type="ECO:0000305" key="7">
    <source>
    </source>
</evidence>
<feature type="transit peptide" description="Chloroplast" evidence="2">
    <location>
        <begin position="1"/>
        <end position="35"/>
    </location>
</feature>
<feature type="chain" id="PRO_0000401421" description="Stearoyl-[acyl-carrier-protein] 9-desaturase 3, chloroplastic">
    <location>
        <begin position="36"/>
        <end position="401"/>
    </location>
</feature>
<feature type="region of interest" description="Disordered" evidence="3">
    <location>
        <begin position="1"/>
        <end position="31"/>
    </location>
</feature>
<feature type="binding site" evidence="1">
    <location>
        <position position="140"/>
    </location>
    <ligand>
        <name>Fe cation</name>
        <dbReference type="ChEBI" id="CHEBI:24875"/>
        <label>1</label>
    </ligand>
</feature>
<feature type="binding site" evidence="1">
    <location>
        <position position="178"/>
    </location>
    <ligand>
        <name>Fe cation</name>
        <dbReference type="ChEBI" id="CHEBI:24875"/>
        <label>1</label>
    </ligand>
</feature>
<feature type="binding site" evidence="1">
    <location>
        <position position="178"/>
    </location>
    <ligand>
        <name>Fe cation</name>
        <dbReference type="ChEBI" id="CHEBI:24875"/>
        <label>2</label>
    </ligand>
</feature>
<feature type="binding site" evidence="1">
    <location>
        <position position="181"/>
    </location>
    <ligand>
        <name>Fe cation</name>
        <dbReference type="ChEBI" id="CHEBI:24875"/>
        <label>1</label>
    </ligand>
</feature>
<feature type="binding site" evidence="1">
    <location>
        <position position="231"/>
    </location>
    <ligand>
        <name>Fe cation</name>
        <dbReference type="ChEBI" id="CHEBI:24875"/>
        <label>2</label>
    </ligand>
</feature>
<feature type="binding site" evidence="1">
    <location>
        <position position="264"/>
    </location>
    <ligand>
        <name>Fe cation</name>
        <dbReference type="ChEBI" id="CHEBI:24875"/>
        <label>1</label>
    </ligand>
</feature>
<feature type="binding site" evidence="1">
    <location>
        <position position="264"/>
    </location>
    <ligand>
        <name>Fe cation</name>
        <dbReference type="ChEBI" id="CHEBI:24875"/>
        <label>2</label>
    </ligand>
</feature>
<feature type="binding site" evidence="1">
    <location>
        <position position="267"/>
    </location>
    <ligand>
        <name>Fe cation</name>
        <dbReference type="ChEBI" id="CHEBI:24875"/>
        <label>2</label>
    </ligand>
</feature>
<feature type="site" description="Confers substrate specificity" evidence="7">
    <location>
        <position position="216"/>
    </location>
</feature>
<gene>
    <name type="primary">S-ACP-DES3</name>
    <name type="synonym">AAD3</name>
    <name type="synonym">SAD3</name>
    <name type="ordered locus">At5g16230</name>
    <name type="ORF">T21H19_150</name>
</gene>
<reference key="1">
    <citation type="journal article" date="2000" name="Nature">
        <title>Sequence and analysis of chromosome 5 of the plant Arabidopsis thaliana.</title>
        <authorList>
            <person name="Tabata S."/>
            <person name="Kaneko T."/>
            <person name="Nakamura Y."/>
            <person name="Kotani H."/>
            <person name="Kato T."/>
            <person name="Asamizu E."/>
            <person name="Miyajima N."/>
            <person name="Sasamoto S."/>
            <person name="Kimura T."/>
            <person name="Hosouchi T."/>
            <person name="Kawashima K."/>
            <person name="Kohara M."/>
            <person name="Matsumoto M."/>
            <person name="Matsuno A."/>
            <person name="Muraki A."/>
            <person name="Nakayama S."/>
            <person name="Nakazaki N."/>
            <person name="Naruo K."/>
            <person name="Okumura S."/>
            <person name="Shinpo S."/>
            <person name="Takeuchi C."/>
            <person name="Wada T."/>
            <person name="Watanabe A."/>
            <person name="Yamada M."/>
            <person name="Yasuda M."/>
            <person name="Sato S."/>
            <person name="de la Bastide M."/>
            <person name="Huang E."/>
            <person name="Spiegel L."/>
            <person name="Gnoj L."/>
            <person name="O'Shaughnessy A."/>
            <person name="Preston R."/>
            <person name="Habermann K."/>
            <person name="Murray J."/>
            <person name="Johnson D."/>
            <person name="Rohlfing T."/>
            <person name="Nelson J."/>
            <person name="Stoneking T."/>
            <person name="Pepin K."/>
            <person name="Spieth J."/>
            <person name="Sekhon M."/>
            <person name="Armstrong J."/>
            <person name="Becker M."/>
            <person name="Belter E."/>
            <person name="Cordum H."/>
            <person name="Cordes M."/>
            <person name="Courtney L."/>
            <person name="Courtney W."/>
            <person name="Dante M."/>
            <person name="Du H."/>
            <person name="Edwards J."/>
            <person name="Fryman J."/>
            <person name="Haakensen B."/>
            <person name="Lamar E."/>
            <person name="Latreille P."/>
            <person name="Leonard S."/>
            <person name="Meyer R."/>
            <person name="Mulvaney E."/>
            <person name="Ozersky P."/>
            <person name="Riley A."/>
            <person name="Strowmatt C."/>
            <person name="Wagner-McPherson C."/>
            <person name="Wollam A."/>
            <person name="Yoakum M."/>
            <person name="Bell M."/>
            <person name="Dedhia N."/>
            <person name="Parnell L."/>
            <person name="Shah R."/>
            <person name="Rodriguez M."/>
            <person name="Hoon See L."/>
            <person name="Vil D."/>
            <person name="Baker J."/>
            <person name="Kirchoff K."/>
            <person name="Toth K."/>
            <person name="King L."/>
            <person name="Bahret A."/>
            <person name="Miller B."/>
            <person name="Marra M.A."/>
            <person name="Martienssen R."/>
            <person name="McCombie W.R."/>
            <person name="Wilson R.K."/>
            <person name="Murphy G."/>
            <person name="Bancroft I."/>
            <person name="Volckaert G."/>
            <person name="Wambutt R."/>
            <person name="Duesterhoeft A."/>
            <person name="Stiekema W."/>
            <person name="Pohl T."/>
            <person name="Entian K.-D."/>
            <person name="Terryn N."/>
            <person name="Hartley N."/>
            <person name="Bent E."/>
            <person name="Johnson S."/>
            <person name="Langham S.-A."/>
            <person name="McCullagh B."/>
            <person name="Robben J."/>
            <person name="Grymonprez B."/>
            <person name="Zimmermann W."/>
            <person name="Ramsperger U."/>
            <person name="Wedler H."/>
            <person name="Balke K."/>
            <person name="Wedler E."/>
            <person name="Peters S."/>
            <person name="van Staveren M."/>
            <person name="Dirkse W."/>
            <person name="Mooijman P."/>
            <person name="Klein Lankhorst R."/>
            <person name="Weitzenegger T."/>
            <person name="Bothe G."/>
            <person name="Rose M."/>
            <person name="Hauf J."/>
            <person name="Berneiser S."/>
            <person name="Hempel S."/>
            <person name="Feldpausch M."/>
            <person name="Lamberth S."/>
            <person name="Villarroel R."/>
            <person name="Gielen J."/>
            <person name="Ardiles W."/>
            <person name="Bents O."/>
            <person name="Lemcke K."/>
            <person name="Kolesov G."/>
            <person name="Mayer K.F.X."/>
            <person name="Rudd S."/>
            <person name="Schoof H."/>
            <person name="Schueller C."/>
            <person name="Zaccaria P."/>
            <person name="Mewes H.-W."/>
            <person name="Bevan M."/>
            <person name="Fransz P.F."/>
        </authorList>
    </citation>
    <scope>NUCLEOTIDE SEQUENCE [LARGE SCALE GENOMIC DNA]</scope>
    <source>
        <strain>cv. Columbia</strain>
    </source>
</reference>
<reference key="2">
    <citation type="journal article" date="2017" name="Plant J.">
        <title>Araport11: a complete reannotation of the Arabidopsis thaliana reference genome.</title>
        <authorList>
            <person name="Cheng C.Y."/>
            <person name="Krishnakumar V."/>
            <person name="Chan A.P."/>
            <person name="Thibaud-Nissen F."/>
            <person name="Schobel S."/>
            <person name="Town C.D."/>
        </authorList>
    </citation>
    <scope>GENOME REANNOTATION</scope>
    <source>
        <strain>cv. Columbia</strain>
    </source>
</reference>
<reference key="3">
    <citation type="submission" date="2006-11" db="EMBL/GenBank/DDBJ databases">
        <title>Arabidopsis ORF clones.</title>
        <authorList>
            <person name="Bautista V.R."/>
            <person name="Kim C.J."/>
            <person name="Chen H."/>
            <person name="Quinitio C."/>
            <person name="Ecker J.R."/>
        </authorList>
    </citation>
    <scope>NUCLEOTIDE SEQUENCE [LARGE SCALE MRNA]</scope>
    <source>
        <strain>cv. Columbia</strain>
    </source>
</reference>
<reference key="4">
    <citation type="journal article" date="2007" name="Plant Mol. Biol.">
        <title>The Arabidopsis stearoyl-acyl carrier protein-desaturase family and the contribution of leaf isoforms to oleic acid synthesis.</title>
        <authorList>
            <person name="Kachroo A."/>
            <person name="Shanklin J."/>
            <person name="Whittle E."/>
            <person name="Lapchyk L."/>
            <person name="Hildebrand D."/>
            <person name="Kachroo P."/>
        </authorList>
    </citation>
    <scope>GENE FAMILY</scope>
    <scope>FUNCTION</scope>
    <scope>CATALYTIC ACTIVITY</scope>
    <scope>TISSUE SPECIFICITY</scope>
</reference>
<reference key="5">
    <citation type="journal article" date="2016" name="Plant Cell">
        <title>Transcriptional activation of two palmitoyl-ACP delta9 desaturase genes by MYB115 and MYB118 is critical for biosynthesis of omega-7 monounsaturated fatty acid in the endosperm of Arabidopsis seeds.</title>
        <authorList>
            <person name="Troncoso-Ponce M.A."/>
            <person name="Barthole G."/>
            <person name="Tremblais G."/>
            <person name="To A."/>
            <person name="Miquel M."/>
            <person name="Lepiniec L."/>
            <person name="Baud S."/>
        </authorList>
    </citation>
    <scope>FUNCTION</scope>
    <scope>DISRUPTION PHENOTYPE</scope>
    <scope>INDUCTION BY MYB115 AND MYB118</scope>
    <scope>DEVELOPMENTAL STAGE</scope>
    <scope>SITE FOR SUBSTRATE SPECIFICITY</scope>
    <scope>CATALYTIC ACTIVITY</scope>
    <source>
        <strain>cv. Columbia</strain>
    </source>
</reference>
<sequence>MSMALLLTSPAMKQKPAVITSPRRGSSPSRRLRVSCVTTNPARKKNETCNHFRPIKEVNNQLTHTIPQEKLEIFKSMENWAEQKLLPYLKPVEDSWQPQDFLPAPENDDEFYDRVKEIRERTKEIPDDYFVVLVGDMITEEALPTYQTTLNTLDGVKDETGGSLSPWAVWIRAWTAEENRHGDLLNKYLYLTGRVDMRHVEKTIQYLIGSGMDSKFENNPYNGFIYTSFQERATFISHGNTARLATTYGDVTLAKICGTIAADEKRHETAYTKIVEKLFEIDPDGSVQALASMMKKRITMPAHLMHDGRDNDLFDHYAAVAQRIGVYTAADYAGILEFLLRRWKVESLGLGLSGEGRRAQEYLCTLPQRIKRLEERANDRVKLVSKPSVSFSWVFGRDVKL</sequence>
<name>STAD3_ARATH</name>
<organism>
    <name type="scientific">Arabidopsis thaliana</name>
    <name type="common">Mouse-ear cress</name>
    <dbReference type="NCBI Taxonomy" id="3702"/>
    <lineage>
        <taxon>Eukaryota</taxon>
        <taxon>Viridiplantae</taxon>
        <taxon>Streptophyta</taxon>
        <taxon>Embryophyta</taxon>
        <taxon>Tracheophyta</taxon>
        <taxon>Spermatophyta</taxon>
        <taxon>Magnoliopsida</taxon>
        <taxon>eudicotyledons</taxon>
        <taxon>Gunneridae</taxon>
        <taxon>Pentapetalae</taxon>
        <taxon>rosids</taxon>
        <taxon>malvids</taxon>
        <taxon>Brassicales</taxon>
        <taxon>Brassicaceae</taxon>
        <taxon>Camelineae</taxon>
        <taxon>Arabidopsis</taxon>
    </lineage>
</organism>
<keyword id="KW-0150">Chloroplast</keyword>
<keyword id="KW-0275">Fatty acid biosynthesis</keyword>
<keyword id="KW-0276">Fatty acid metabolism</keyword>
<keyword id="KW-0408">Iron</keyword>
<keyword id="KW-0444">Lipid biosynthesis</keyword>
<keyword id="KW-0443">Lipid metabolism</keyword>
<keyword id="KW-0479">Metal-binding</keyword>
<keyword id="KW-0560">Oxidoreductase</keyword>
<keyword id="KW-0934">Plastid</keyword>
<keyword id="KW-1185">Reference proteome</keyword>
<keyword id="KW-0809">Transit peptide</keyword>
<proteinExistence type="evidence at protein level"/>
<comment type="function">
    <text evidence="4 5">Converts stearoyl-ACP to oleoyl-ACP by introduction of a cis double bond between carbons 9 and 10 of the acyl chain. Also able to convert palmitoyl-ACP to palmitoleoyl-ACP at the C9 position. Exhibits delta-9 palmitoyl-[acyl-carrier-protein] desaturase (PAD) activity. Involved in omega-7 monounsaturated fatty acid biosynthesis, especially in the endosperm oil (PubMed:27681170).</text>
</comment>
<comment type="catalytic activity">
    <reaction evidence="4 5">
        <text>octadecanoyl-[ACP] + 2 reduced [2Fe-2S]-[ferredoxin] + O2 + 2 H(+) = (9Z)-octadecenoyl-[ACP] + 2 oxidized [2Fe-2S]-[ferredoxin] + 2 H2O</text>
        <dbReference type="Rhea" id="RHEA:11776"/>
        <dbReference type="Rhea" id="RHEA-COMP:9656"/>
        <dbReference type="Rhea" id="RHEA-COMP:9924"/>
        <dbReference type="Rhea" id="RHEA-COMP:10000"/>
        <dbReference type="Rhea" id="RHEA-COMP:10001"/>
        <dbReference type="ChEBI" id="CHEBI:15377"/>
        <dbReference type="ChEBI" id="CHEBI:15378"/>
        <dbReference type="ChEBI" id="CHEBI:15379"/>
        <dbReference type="ChEBI" id="CHEBI:33737"/>
        <dbReference type="ChEBI" id="CHEBI:33738"/>
        <dbReference type="ChEBI" id="CHEBI:78495"/>
        <dbReference type="ChEBI" id="CHEBI:78783"/>
        <dbReference type="EC" id="1.14.19.2"/>
    </reaction>
</comment>
<comment type="cofactor">
    <cofactor evidence="1">
        <name>Fe(2+)</name>
        <dbReference type="ChEBI" id="CHEBI:29033"/>
    </cofactor>
    <text evidence="1">Binds 2 Fe(2+) ions per subunit.</text>
</comment>
<comment type="pathway">
    <text>Lipid metabolism; fatty acid metabolism.</text>
</comment>
<comment type="subunit">
    <text evidence="1">Homodimer.</text>
</comment>
<comment type="subcellular location">
    <subcellularLocation>
        <location evidence="6">Plastid</location>
        <location evidence="6">Chloroplast</location>
    </subcellularLocation>
</comment>
<comment type="tissue specificity">
    <text evidence="4">Ubiquitously expressed with a preference in leaves, flowers and stems.</text>
</comment>
<comment type="developmental stage">
    <text evidence="5">Accumulates in maturing endosperm.</text>
</comment>
<comment type="induction">
    <text evidence="5">Activated by MYB115 and MYB118 in the endosperm.</text>
</comment>
<comment type="disruption phenotype">
    <text evidence="5">Reduced omega-7 fatty acids accumulation in the endosperm. The endosperm oil of double mutant aad2-3 aad3-3 lacks omega-7 fatty acids.</text>
</comment>
<comment type="similarity">
    <text evidence="6">Belongs to the fatty acid desaturase type 2 family.</text>
</comment>
<accession>Q9LF05</accession>
<dbReference type="EC" id="1.14.19.2" evidence="4 5"/>
<dbReference type="EMBL" id="AL391148">
    <property type="protein sequence ID" value="CAC01864.1"/>
    <property type="molecule type" value="Genomic_DNA"/>
</dbReference>
<dbReference type="EMBL" id="CP002688">
    <property type="protein sequence ID" value="AED92263.1"/>
    <property type="molecule type" value="Genomic_DNA"/>
</dbReference>
<dbReference type="EMBL" id="BT029294">
    <property type="protein sequence ID" value="ABK32108.1"/>
    <property type="molecule type" value="mRNA"/>
</dbReference>
<dbReference type="PIR" id="T51493">
    <property type="entry name" value="T51493"/>
</dbReference>
<dbReference type="RefSeq" id="NP_197127.1">
    <property type="nucleotide sequence ID" value="NM_121628.4"/>
</dbReference>
<dbReference type="SMR" id="Q9LF05"/>
<dbReference type="FunCoup" id="Q9LF05">
    <property type="interactions" value="71"/>
</dbReference>
<dbReference type="STRING" id="3702.Q9LF05"/>
<dbReference type="PaxDb" id="3702-AT5G16230.1"/>
<dbReference type="ProteomicsDB" id="228342"/>
<dbReference type="EnsemblPlants" id="AT5G16230.1">
    <property type="protein sequence ID" value="AT5G16230.1"/>
    <property type="gene ID" value="AT5G16230"/>
</dbReference>
<dbReference type="GeneID" id="831483"/>
<dbReference type="Gramene" id="AT5G16230.1">
    <property type="protein sequence ID" value="AT5G16230.1"/>
    <property type="gene ID" value="AT5G16230"/>
</dbReference>
<dbReference type="KEGG" id="ath:AT5G16230"/>
<dbReference type="Araport" id="AT5G16230"/>
<dbReference type="TAIR" id="AT5G16230">
    <property type="gene designation" value="AAD3"/>
</dbReference>
<dbReference type="eggNOG" id="ENOG502QRJK">
    <property type="taxonomic scope" value="Eukaryota"/>
</dbReference>
<dbReference type="HOGENOM" id="CLU_034505_1_0_1"/>
<dbReference type="InParanoid" id="Q9LF05"/>
<dbReference type="OrthoDB" id="1047951at2759"/>
<dbReference type="BRENDA" id="1.14.19.2">
    <property type="organism ID" value="399"/>
</dbReference>
<dbReference type="UniPathway" id="UPA00199"/>
<dbReference type="PRO" id="PR:Q9LF05"/>
<dbReference type="Proteomes" id="UP000006548">
    <property type="component" value="Chromosome 5"/>
</dbReference>
<dbReference type="ExpressionAtlas" id="Q9LF05">
    <property type="expression patterns" value="baseline and differential"/>
</dbReference>
<dbReference type="GO" id="GO:0009507">
    <property type="term" value="C:chloroplast"/>
    <property type="evidence" value="ECO:0007669"/>
    <property type="project" value="UniProtKB-SubCell"/>
</dbReference>
<dbReference type="GO" id="GO:0046872">
    <property type="term" value="F:metal ion binding"/>
    <property type="evidence" value="ECO:0007669"/>
    <property type="project" value="UniProtKB-KW"/>
</dbReference>
<dbReference type="GO" id="GO:0045300">
    <property type="term" value="F:stearoyl-[ACP] desaturase activity"/>
    <property type="evidence" value="ECO:0000314"/>
    <property type="project" value="UniProtKB"/>
</dbReference>
<dbReference type="GO" id="GO:0009960">
    <property type="term" value="P:endosperm development"/>
    <property type="evidence" value="ECO:0000315"/>
    <property type="project" value="TAIR"/>
</dbReference>
<dbReference type="GO" id="GO:0055089">
    <property type="term" value="P:fatty acid homeostasis"/>
    <property type="evidence" value="ECO:0000315"/>
    <property type="project" value="UniProtKB"/>
</dbReference>
<dbReference type="GO" id="GO:2000014">
    <property type="term" value="P:regulation of endosperm development"/>
    <property type="evidence" value="ECO:0000315"/>
    <property type="project" value="UniProtKB"/>
</dbReference>
<dbReference type="GO" id="GO:0006636">
    <property type="term" value="P:unsaturated fatty acid biosynthetic process"/>
    <property type="evidence" value="ECO:0000315"/>
    <property type="project" value="UniProtKB"/>
</dbReference>
<dbReference type="CDD" id="cd01050">
    <property type="entry name" value="Acyl_ACP_Desat"/>
    <property type="match status" value="1"/>
</dbReference>
<dbReference type="FunFam" id="1.10.620.20:FF:000002">
    <property type="entry name" value="Stearoyl-[acyl-carrier-protein] 9-desaturase, chloroplastic"/>
    <property type="match status" value="1"/>
</dbReference>
<dbReference type="Gene3D" id="1.10.620.20">
    <property type="entry name" value="Ribonucleotide Reductase, subunit A"/>
    <property type="match status" value="1"/>
</dbReference>
<dbReference type="InterPro" id="IPR005067">
    <property type="entry name" value="Fatty_acid_desaturase-2"/>
</dbReference>
<dbReference type="InterPro" id="IPR009078">
    <property type="entry name" value="Ferritin-like_SF"/>
</dbReference>
<dbReference type="InterPro" id="IPR012348">
    <property type="entry name" value="RNR-like"/>
</dbReference>
<dbReference type="PANTHER" id="PTHR31155">
    <property type="entry name" value="ACYL- ACYL-CARRIER-PROTEIN DESATURASE-RELATED"/>
    <property type="match status" value="1"/>
</dbReference>
<dbReference type="PANTHER" id="PTHR31155:SF18">
    <property type="entry name" value="STEAROYL-[ACYL-CARRIER-PROTEIN] 9-DESATURASE 3, CHLOROPLASTIC"/>
    <property type="match status" value="1"/>
</dbReference>
<dbReference type="Pfam" id="PF03405">
    <property type="entry name" value="FA_desaturase_2"/>
    <property type="match status" value="1"/>
</dbReference>
<dbReference type="PIRSF" id="PIRSF000346">
    <property type="entry name" value="Dlt9_acylACP_des"/>
    <property type="match status" value="1"/>
</dbReference>
<dbReference type="SUPFAM" id="SSF47240">
    <property type="entry name" value="Ferritin-like"/>
    <property type="match status" value="1"/>
</dbReference>